<sequence length="228" mass="25338">MQKLKQQVFEANMDLPRYGLVTFTWGNVSAIDRERGLVVIKPSGVAYETMKADDMVVVDMSGKVVEGEYRPSSDTATHLELYRRYPSLGGIVHTHSTHATAWAQAGLAIPALGTTHADYFFGDIPCTRGLSEEEVQGEYELNTGKVIIETLGNAEPLHTPGIVVYQHGPFAWGKDAHDAVHNAVVMEEVAKMAWIARSINPQLNHIDSFLMNKHFMRKHGPNAYYGQK</sequence>
<name>ULAF_ECOHS</name>
<protein>
    <recommendedName>
        <fullName evidence="1">L-ribulose-5-phosphate 4-epimerase UlaF</fullName>
        <ecNumber evidence="1">5.1.3.4</ecNumber>
    </recommendedName>
    <alternativeName>
        <fullName evidence="1">L-ascorbate utilization protein F</fullName>
    </alternativeName>
    <alternativeName>
        <fullName evidence="1">Phosphoribulose isomerase</fullName>
    </alternativeName>
</protein>
<feature type="chain" id="PRO_1000070637" description="L-ribulose-5-phosphate 4-epimerase UlaF">
    <location>
        <begin position="1"/>
        <end position="228"/>
    </location>
</feature>
<feature type="active site" description="Proton donor/acceptor" evidence="1">
    <location>
        <position position="118"/>
    </location>
</feature>
<feature type="active site" description="Proton donor/acceptor" evidence="1">
    <location>
        <position position="225"/>
    </location>
</feature>
<feature type="binding site" evidence="1">
    <location>
        <begin position="26"/>
        <end position="27"/>
    </location>
    <ligand>
        <name>substrate</name>
    </ligand>
</feature>
<feature type="binding site" evidence="1">
    <location>
        <begin position="43"/>
        <end position="44"/>
    </location>
    <ligand>
        <name>substrate</name>
    </ligand>
</feature>
<feature type="binding site" evidence="1">
    <location>
        <begin position="72"/>
        <end position="73"/>
    </location>
    <ligand>
        <name>substrate</name>
    </ligand>
</feature>
<feature type="binding site" evidence="1">
    <location>
        <position position="74"/>
    </location>
    <ligand>
        <name>Zn(2+)</name>
        <dbReference type="ChEBI" id="CHEBI:29105"/>
    </ligand>
</feature>
<feature type="binding site" evidence="1">
    <location>
        <position position="93"/>
    </location>
    <ligand>
        <name>Zn(2+)</name>
        <dbReference type="ChEBI" id="CHEBI:29105"/>
    </ligand>
</feature>
<feature type="binding site" evidence="1">
    <location>
        <position position="95"/>
    </location>
    <ligand>
        <name>Zn(2+)</name>
        <dbReference type="ChEBI" id="CHEBI:29105"/>
    </ligand>
</feature>
<feature type="binding site" evidence="1">
    <location>
        <position position="167"/>
    </location>
    <ligand>
        <name>Zn(2+)</name>
        <dbReference type="ChEBI" id="CHEBI:29105"/>
    </ligand>
</feature>
<comment type="function">
    <text evidence="1">Catalyzes the isomerization of L-ribulose 5-phosphate to D-xylulose 5-phosphate. Is involved in the anaerobic L-ascorbate utilization.</text>
</comment>
<comment type="catalytic activity">
    <reaction evidence="1">
        <text>L-ribulose 5-phosphate = D-xylulose 5-phosphate</text>
        <dbReference type="Rhea" id="RHEA:22368"/>
        <dbReference type="ChEBI" id="CHEBI:57737"/>
        <dbReference type="ChEBI" id="CHEBI:58226"/>
        <dbReference type="EC" id="5.1.3.4"/>
    </reaction>
</comment>
<comment type="cofactor">
    <cofactor evidence="1">
        <name>Zn(2+)</name>
        <dbReference type="ChEBI" id="CHEBI:29105"/>
    </cofactor>
    <text evidence="1">Binds 1 zinc ion per subunit.</text>
</comment>
<comment type="pathway">
    <text evidence="1">Cofactor degradation; L-ascorbate degradation; D-xylulose 5-phosphate from L-ascorbate: step 4/4.</text>
</comment>
<comment type="induction">
    <text evidence="1">Induced by L-ascorbate. Repressed by UlaR.</text>
</comment>
<comment type="similarity">
    <text evidence="1">Belongs to the aldolase class II family. AraD/FucA subfamily.</text>
</comment>
<reference key="1">
    <citation type="journal article" date="2008" name="J. Bacteriol.">
        <title>The pangenome structure of Escherichia coli: comparative genomic analysis of E. coli commensal and pathogenic isolates.</title>
        <authorList>
            <person name="Rasko D.A."/>
            <person name="Rosovitz M.J."/>
            <person name="Myers G.S.A."/>
            <person name="Mongodin E.F."/>
            <person name="Fricke W.F."/>
            <person name="Gajer P."/>
            <person name="Crabtree J."/>
            <person name="Sebaihia M."/>
            <person name="Thomson N.R."/>
            <person name="Chaudhuri R."/>
            <person name="Henderson I.R."/>
            <person name="Sperandio V."/>
            <person name="Ravel J."/>
        </authorList>
    </citation>
    <scope>NUCLEOTIDE SEQUENCE [LARGE SCALE GENOMIC DNA]</scope>
    <source>
        <strain>HS</strain>
    </source>
</reference>
<evidence type="ECO:0000255" key="1">
    <source>
        <dbReference type="HAMAP-Rule" id="MF_01952"/>
    </source>
</evidence>
<gene>
    <name evidence="1" type="primary">ulaF</name>
    <name type="ordered locus">EcHS_A4442</name>
</gene>
<proteinExistence type="inferred from homology"/>
<keyword id="KW-0119">Carbohydrate metabolism</keyword>
<keyword id="KW-0413">Isomerase</keyword>
<keyword id="KW-0479">Metal-binding</keyword>
<keyword id="KW-0862">Zinc</keyword>
<organism>
    <name type="scientific">Escherichia coli O9:H4 (strain HS)</name>
    <dbReference type="NCBI Taxonomy" id="331112"/>
    <lineage>
        <taxon>Bacteria</taxon>
        <taxon>Pseudomonadati</taxon>
        <taxon>Pseudomonadota</taxon>
        <taxon>Gammaproteobacteria</taxon>
        <taxon>Enterobacterales</taxon>
        <taxon>Enterobacteriaceae</taxon>
        <taxon>Escherichia</taxon>
    </lineage>
</organism>
<accession>A8A7U4</accession>
<dbReference type="EC" id="5.1.3.4" evidence="1"/>
<dbReference type="EMBL" id="CP000802">
    <property type="protein sequence ID" value="ABV08598.1"/>
    <property type="molecule type" value="Genomic_DNA"/>
</dbReference>
<dbReference type="RefSeq" id="WP_001170812.1">
    <property type="nucleotide sequence ID" value="NC_009800.1"/>
</dbReference>
<dbReference type="SMR" id="A8A7U4"/>
<dbReference type="KEGG" id="ecx:EcHS_A4442"/>
<dbReference type="HOGENOM" id="CLU_006033_5_0_6"/>
<dbReference type="UniPathway" id="UPA00263">
    <property type="reaction ID" value="UER00380"/>
</dbReference>
<dbReference type="GO" id="GO:0005829">
    <property type="term" value="C:cytosol"/>
    <property type="evidence" value="ECO:0007669"/>
    <property type="project" value="TreeGrafter"/>
</dbReference>
<dbReference type="GO" id="GO:0016832">
    <property type="term" value="F:aldehyde-lyase activity"/>
    <property type="evidence" value="ECO:0007669"/>
    <property type="project" value="TreeGrafter"/>
</dbReference>
<dbReference type="GO" id="GO:0008742">
    <property type="term" value="F:L-ribulose-phosphate 4-epimerase activity"/>
    <property type="evidence" value="ECO:0007669"/>
    <property type="project" value="UniProtKB-UniRule"/>
</dbReference>
<dbReference type="GO" id="GO:0008270">
    <property type="term" value="F:zinc ion binding"/>
    <property type="evidence" value="ECO:0007669"/>
    <property type="project" value="UniProtKB-UniRule"/>
</dbReference>
<dbReference type="GO" id="GO:0019854">
    <property type="term" value="P:L-ascorbic acid catabolic process"/>
    <property type="evidence" value="ECO:0007669"/>
    <property type="project" value="UniProtKB-UniRule"/>
</dbReference>
<dbReference type="GO" id="GO:0019323">
    <property type="term" value="P:pentose catabolic process"/>
    <property type="evidence" value="ECO:0007669"/>
    <property type="project" value="TreeGrafter"/>
</dbReference>
<dbReference type="CDD" id="cd00398">
    <property type="entry name" value="Aldolase_II"/>
    <property type="match status" value="1"/>
</dbReference>
<dbReference type="FunFam" id="3.40.225.10:FF:000001">
    <property type="entry name" value="L-ribulose-5-phosphate 4-epimerase UlaF"/>
    <property type="match status" value="1"/>
</dbReference>
<dbReference type="Gene3D" id="3.40.225.10">
    <property type="entry name" value="Class II aldolase/adducin N-terminal domain"/>
    <property type="match status" value="1"/>
</dbReference>
<dbReference type="HAMAP" id="MF_01952">
    <property type="entry name" value="UlaF"/>
    <property type="match status" value="1"/>
</dbReference>
<dbReference type="InterPro" id="IPR050197">
    <property type="entry name" value="Aldolase_class_II_sugar_metab"/>
</dbReference>
<dbReference type="InterPro" id="IPR001303">
    <property type="entry name" value="Aldolase_II/adducin_N"/>
</dbReference>
<dbReference type="InterPro" id="IPR036409">
    <property type="entry name" value="Aldolase_II/adducin_N_sf"/>
</dbReference>
<dbReference type="InterPro" id="IPR023499">
    <property type="entry name" value="UlaF"/>
</dbReference>
<dbReference type="NCBIfam" id="NF006047">
    <property type="entry name" value="PRK08193.1"/>
    <property type="match status" value="1"/>
</dbReference>
<dbReference type="NCBIfam" id="NF009003">
    <property type="entry name" value="PRK12348.1"/>
    <property type="match status" value="1"/>
</dbReference>
<dbReference type="PANTHER" id="PTHR22789">
    <property type="entry name" value="FUCULOSE PHOSPHATE ALDOLASE"/>
    <property type="match status" value="1"/>
</dbReference>
<dbReference type="PANTHER" id="PTHR22789:SF9">
    <property type="entry name" value="L-RIBULOSE-5-PHOSPHATE 4-EPIMERASE ULAF"/>
    <property type="match status" value="1"/>
</dbReference>
<dbReference type="Pfam" id="PF00596">
    <property type="entry name" value="Aldolase_II"/>
    <property type="match status" value="1"/>
</dbReference>
<dbReference type="SMART" id="SM01007">
    <property type="entry name" value="Aldolase_II"/>
    <property type="match status" value="1"/>
</dbReference>
<dbReference type="SUPFAM" id="SSF53639">
    <property type="entry name" value="AraD/HMP-PK domain-like"/>
    <property type="match status" value="1"/>
</dbReference>